<feature type="chain" id="PRO_1000061129" description="Ribonuclease PH">
    <location>
        <begin position="1"/>
        <end position="242"/>
    </location>
</feature>
<feature type="binding site" evidence="1">
    <location>
        <position position="86"/>
    </location>
    <ligand>
        <name>phosphate</name>
        <dbReference type="ChEBI" id="CHEBI:43474"/>
        <note>substrate</note>
    </ligand>
</feature>
<feature type="binding site" evidence="1">
    <location>
        <begin position="124"/>
        <end position="126"/>
    </location>
    <ligand>
        <name>phosphate</name>
        <dbReference type="ChEBI" id="CHEBI:43474"/>
        <note>substrate</note>
    </ligand>
</feature>
<gene>
    <name evidence="1" type="primary">rph</name>
    <name type="ordered locus">BPUM_2491</name>
</gene>
<sequence>MRLDERHYDELRKIEIEAGYITHPEGSVLISAGNTKVICNASIEDRVPPFLRGEGKGWITAEYSMLPRATAQRTIRESSKGKVTGRTMEIQRLIGRALRAVVDLEKLGERTIWIDCDVIQADGGTRTASITGAFVAMTLAIQKLRAEGAIKQNPITDYLAAISVGIDSQQGLLLDLNYEEDSSAEVDMNVIMTGAGRFVELQGTGEEATFSREQLNGLLDLAEKGIKELIEKQKAVTGEVIE</sequence>
<proteinExistence type="inferred from homology"/>
<name>RNPH_BACP2</name>
<keyword id="KW-0548">Nucleotidyltransferase</keyword>
<keyword id="KW-0694">RNA-binding</keyword>
<keyword id="KW-0698">rRNA processing</keyword>
<keyword id="KW-0808">Transferase</keyword>
<keyword id="KW-0819">tRNA processing</keyword>
<keyword id="KW-0820">tRNA-binding</keyword>
<accession>A8FFY6</accession>
<evidence type="ECO:0000255" key="1">
    <source>
        <dbReference type="HAMAP-Rule" id="MF_00564"/>
    </source>
</evidence>
<comment type="function">
    <text evidence="1">Phosphorolytic 3'-5' exoribonuclease that plays an important role in tRNA 3'-end maturation. Removes nucleotide residues following the 3'-CCA terminus of tRNAs; can also add nucleotides to the ends of RNA molecules by using nucleoside diphosphates as substrates, but this may not be physiologically important. Probably plays a role in initiation of 16S rRNA degradation (leading to ribosome degradation) during starvation.</text>
</comment>
<comment type="catalytic activity">
    <reaction evidence="1">
        <text>tRNA(n+1) + phosphate = tRNA(n) + a ribonucleoside 5'-diphosphate</text>
        <dbReference type="Rhea" id="RHEA:10628"/>
        <dbReference type="Rhea" id="RHEA-COMP:17343"/>
        <dbReference type="Rhea" id="RHEA-COMP:17344"/>
        <dbReference type="ChEBI" id="CHEBI:43474"/>
        <dbReference type="ChEBI" id="CHEBI:57930"/>
        <dbReference type="ChEBI" id="CHEBI:173114"/>
        <dbReference type="EC" id="2.7.7.56"/>
    </reaction>
</comment>
<comment type="subunit">
    <text evidence="1">Homohexameric ring arranged as a trimer of dimers.</text>
</comment>
<comment type="similarity">
    <text evidence="1">Belongs to the RNase PH family.</text>
</comment>
<organism>
    <name type="scientific">Bacillus pumilus (strain SAFR-032)</name>
    <dbReference type="NCBI Taxonomy" id="315750"/>
    <lineage>
        <taxon>Bacteria</taxon>
        <taxon>Bacillati</taxon>
        <taxon>Bacillota</taxon>
        <taxon>Bacilli</taxon>
        <taxon>Bacillales</taxon>
        <taxon>Bacillaceae</taxon>
        <taxon>Bacillus</taxon>
    </lineage>
</organism>
<reference key="1">
    <citation type="journal article" date="2007" name="PLoS ONE">
        <title>Paradoxical DNA repair and peroxide resistance gene conservation in Bacillus pumilus SAFR-032.</title>
        <authorList>
            <person name="Gioia J."/>
            <person name="Yerrapragada S."/>
            <person name="Qin X."/>
            <person name="Jiang H."/>
            <person name="Igboeli O.C."/>
            <person name="Muzny D."/>
            <person name="Dugan-Rocha S."/>
            <person name="Ding Y."/>
            <person name="Hawes A."/>
            <person name="Liu W."/>
            <person name="Perez L."/>
            <person name="Kovar C."/>
            <person name="Dinh H."/>
            <person name="Lee S."/>
            <person name="Nazareth L."/>
            <person name="Blyth P."/>
            <person name="Holder M."/>
            <person name="Buhay C."/>
            <person name="Tirumalai M.R."/>
            <person name="Liu Y."/>
            <person name="Dasgupta I."/>
            <person name="Bokhetache L."/>
            <person name="Fujita M."/>
            <person name="Karouia F."/>
            <person name="Eswara Moorthy P."/>
            <person name="Siefert J."/>
            <person name="Uzman A."/>
            <person name="Buzumbo P."/>
            <person name="Verma A."/>
            <person name="Zwiya H."/>
            <person name="McWilliams B.D."/>
            <person name="Olowu A."/>
            <person name="Clinkenbeard K.D."/>
            <person name="Newcombe D."/>
            <person name="Golebiewski L."/>
            <person name="Petrosino J.F."/>
            <person name="Nicholson W.L."/>
            <person name="Fox G.E."/>
            <person name="Venkateswaran K."/>
            <person name="Highlander S.K."/>
            <person name="Weinstock G.M."/>
        </authorList>
    </citation>
    <scope>NUCLEOTIDE SEQUENCE [LARGE SCALE GENOMIC DNA]</scope>
    <source>
        <strain>SAFR-032</strain>
    </source>
</reference>
<dbReference type="EC" id="2.7.7.56" evidence="1"/>
<dbReference type="EMBL" id="CP000813">
    <property type="protein sequence ID" value="ABV63153.1"/>
    <property type="molecule type" value="Genomic_DNA"/>
</dbReference>
<dbReference type="RefSeq" id="WP_012010809.1">
    <property type="nucleotide sequence ID" value="NC_009848.4"/>
</dbReference>
<dbReference type="SMR" id="A8FFY6"/>
<dbReference type="STRING" id="315750.BPUM_2491"/>
<dbReference type="GeneID" id="5621756"/>
<dbReference type="KEGG" id="bpu:BPUM_2491"/>
<dbReference type="eggNOG" id="COG0689">
    <property type="taxonomic scope" value="Bacteria"/>
</dbReference>
<dbReference type="HOGENOM" id="CLU_050858_0_0_9"/>
<dbReference type="OrthoDB" id="9802265at2"/>
<dbReference type="Proteomes" id="UP000001355">
    <property type="component" value="Chromosome"/>
</dbReference>
<dbReference type="GO" id="GO:0000175">
    <property type="term" value="F:3'-5'-RNA exonuclease activity"/>
    <property type="evidence" value="ECO:0007669"/>
    <property type="project" value="UniProtKB-UniRule"/>
</dbReference>
<dbReference type="GO" id="GO:0000049">
    <property type="term" value="F:tRNA binding"/>
    <property type="evidence" value="ECO:0007669"/>
    <property type="project" value="UniProtKB-UniRule"/>
</dbReference>
<dbReference type="GO" id="GO:0009022">
    <property type="term" value="F:tRNA nucleotidyltransferase activity"/>
    <property type="evidence" value="ECO:0007669"/>
    <property type="project" value="UniProtKB-UniRule"/>
</dbReference>
<dbReference type="GO" id="GO:0016075">
    <property type="term" value="P:rRNA catabolic process"/>
    <property type="evidence" value="ECO:0007669"/>
    <property type="project" value="UniProtKB-UniRule"/>
</dbReference>
<dbReference type="GO" id="GO:0006364">
    <property type="term" value="P:rRNA processing"/>
    <property type="evidence" value="ECO:0007669"/>
    <property type="project" value="UniProtKB-KW"/>
</dbReference>
<dbReference type="GO" id="GO:0008033">
    <property type="term" value="P:tRNA processing"/>
    <property type="evidence" value="ECO:0007669"/>
    <property type="project" value="UniProtKB-UniRule"/>
</dbReference>
<dbReference type="CDD" id="cd11362">
    <property type="entry name" value="RNase_PH_bact"/>
    <property type="match status" value="1"/>
</dbReference>
<dbReference type="FunFam" id="3.30.230.70:FF:000003">
    <property type="entry name" value="Ribonuclease PH"/>
    <property type="match status" value="1"/>
</dbReference>
<dbReference type="Gene3D" id="3.30.230.70">
    <property type="entry name" value="GHMP Kinase, N-terminal domain"/>
    <property type="match status" value="1"/>
</dbReference>
<dbReference type="HAMAP" id="MF_00564">
    <property type="entry name" value="RNase_PH"/>
    <property type="match status" value="1"/>
</dbReference>
<dbReference type="InterPro" id="IPR001247">
    <property type="entry name" value="ExoRNase_PH_dom1"/>
</dbReference>
<dbReference type="InterPro" id="IPR015847">
    <property type="entry name" value="ExoRNase_PH_dom2"/>
</dbReference>
<dbReference type="InterPro" id="IPR036345">
    <property type="entry name" value="ExoRNase_PH_dom2_sf"/>
</dbReference>
<dbReference type="InterPro" id="IPR027408">
    <property type="entry name" value="PNPase/RNase_PH_dom_sf"/>
</dbReference>
<dbReference type="InterPro" id="IPR020568">
    <property type="entry name" value="Ribosomal_Su5_D2-typ_SF"/>
</dbReference>
<dbReference type="InterPro" id="IPR050080">
    <property type="entry name" value="RNase_PH"/>
</dbReference>
<dbReference type="InterPro" id="IPR002381">
    <property type="entry name" value="RNase_PH_bac-type"/>
</dbReference>
<dbReference type="InterPro" id="IPR018336">
    <property type="entry name" value="RNase_PH_CS"/>
</dbReference>
<dbReference type="NCBIfam" id="TIGR01966">
    <property type="entry name" value="RNasePH"/>
    <property type="match status" value="1"/>
</dbReference>
<dbReference type="PANTHER" id="PTHR11953">
    <property type="entry name" value="EXOSOME COMPLEX COMPONENT"/>
    <property type="match status" value="1"/>
</dbReference>
<dbReference type="PANTHER" id="PTHR11953:SF0">
    <property type="entry name" value="EXOSOME COMPLEX COMPONENT RRP41"/>
    <property type="match status" value="1"/>
</dbReference>
<dbReference type="Pfam" id="PF01138">
    <property type="entry name" value="RNase_PH"/>
    <property type="match status" value="1"/>
</dbReference>
<dbReference type="Pfam" id="PF03725">
    <property type="entry name" value="RNase_PH_C"/>
    <property type="match status" value="1"/>
</dbReference>
<dbReference type="SUPFAM" id="SSF55666">
    <property type="entry name" value="Ribonuclease PH domain 2-like"/>
    <property type="match status" value="1"/>
</dbReference>
<dbReference type="SUPFAM" id="SSF54211">
    <property type="entry name" value="Ribosomal protein S5 domain 2-like"/>
    <property type="match status" value="1"/>
</dbReference>
<dbReference type="PROSITE" id="PS01277">
    <property type="entry name" value="RIBONUCLEASE_PH"/>
    <property type="match status" value="1"/>
</dbReference>
<protein>
    <recommendedName>
        <fullName evidence="1">Ribonuclease PH</fullName>
        <shortName evidence="1">RNase PH</shortName>
        <ecNumber evidence="1">2.7.7.56</ecNumber>
    </recommendedName>
    <alternativeName>
        <fullName evidence="1">tRNA nucleotidyltransferase</fullName>
    </alternativeName>
</protein>